<evidence type="ECO:0000250" key="1">
    <source>
        <dbReference type="UniProtKB" id="Q56222"/>
    </source>
</evidence>
<evidence type="ECO:0000255" key="2">
    <source>
        <dbReference type="PROSITE-ProRule" id="PRU00711"/>
    </source>
</evidence>
<evidence type="ECO:0000269" key="3">
    <source>
    </source>
</evidence>
<evidence type="ECO:0000269" key="4">
    <source>
    </source>
</evidence>
<evidence type="ECO:0000303" key="5">
    <source>
    </source>
</evidence>
<evidence type="ECO:0000303" key="6">
    <source>
    </source>
</evidence>
<evidence type="ECO:0000305" key="7"/>
<evidence type="ECO:0000305" key="8">
    <source>
    </source>
</evidence>
<evidence type="ECO:0000305" key="9">
    <source>
    </source>
</evidence>
<evidence type="ECO:0000312" key="10">
    <source>
        <dbReference type="EMBL" id="AAD36495.1"/>
    </source>
</evidence>
<evidence type="ECO:0000312" key="11">
    <source>
        <dbReference type="EMBL" id="AGL50355.1"/>
    </source>
</evidence>
<evidence type="ECO:0007829" key="12">
    <source>
        <dbReference type="PDB" id="7P5H"/>
    </source>
</evidence>
<evidence type="ECO:0007829" key="13">
    <source>
        <dbReference type="PDB" id="7P8N"/>
    </source>
</evidence>
<evidence type="ECO:0007829" key="14">
    <source>
        <dbReference type="PDB" id="7P91"/>
    </source>
</evidence>
<evidence type="ECO:0007829" key="15">
    <source>
        <dbReference type="PDB" id="7P92"/>
    </source>
</evidence>
<comment type="function">
    <text evidence="4">Catalyzes the oxidation of the physiological electron carriers NADH and reduced ferredoxin, coupled to the production of H(2) (PubMed:19411328). Acts as a bifurcating [FeFe] hydrogenase, which uses the exergonic oxidation of reduced ferredoxin to drive the unfavorable oxidation of NADH to produce H(2) (PubMed:19411328). The beta subunit contains flavin- and NAD-binding sites and is potentially the site for NADH oxidation, with the subsequent shuttling of electrons to the alpha subunit (PubMed:19411328).</text>
</comment>
<comment type="catalytic activity">
    <reaction evidence="4">
        <text>2 H2 + 2 oxidized [2Fe-2S]-[ferredoxin] + NAD(+) = 2 reduced [2Fe-2S]-[ferredoxin] + NADH + 3 H(+)</text>
        <dbReference type="Rhea" id="RHEA:30279"/>
        <dbReference type="Rhea" id="RHEA-COMP:10000"/>
        <dbReference type="Rhea" id="RHEA-COMP:10001"/>
        <dbReference type="ChEBI" id="CHEBI:15378"/>
        <dbReference type="ChEBI" id="CHEBI:18276"/>
        <dbReference type="ChEBI" id="CHEBI:33737"/>
        <dbReference type="ChEBI" id="CHEBI:33738"/>
        <dbReference type="ChEBI" id="CHEBI:57540"/>
        <dbReference type="ChEBI" id="CHEBI:57945"/>
        <dbReference type="EC" id="1.12.1.4"/>
    </reaction>
    <physiologicalReaction direction="right-to-left" evidence="4">
        <dbReference type="Rhea" id="RHEA:30281"/>
    </physiologicalReaction>
</comment>
<comment type="cofactor">
    <cofactor evidence="3">
        <name>[2Fe-2S] cluster</name>
        <dbReference type="ChEBI" id="CHEBI:190135"/>
    </cofactor>
    <text evidence="8 9">May bind 1 [2Fe-2S] cluster per subunit.</text>
</comment>
<comment type="cofactor">
    <cofactor evidence="3">
        <name>[4Fe-4S] cluster</name>
        <dbReference type="ChEBI" id="CHEBI:49883"/>
    </cofactor>
    <text evidence="8 9">May bind 3 [4Fe-4S] cluster per subunit.</text>
</comment>
<comment type="cofactor">
    <cofactor evidence="1">
        <name>FMN</name>
        <dbReference type="ChEBI" id="CHEBI:58210"/>
    </cofactor>
    <text evidence="1">Binds 1 FMN per subunit.</text>
</comment>
<comment type="subunit">
    <text evidence="3">Heterotrimer composed of HydA (alpha subunit), HydB (beta subunit) and HydC (gamma subunit) (PubMed:10482784). Near neutral and acidic pH conditions favor oligomerization of the heterotrimeric holoenzyme (PubMed:10482784).</text>
</comment>
<comment type="subcellular location">
    <subcellularLocation>
        <location evidence="4">Cytoplasm</location>
    </subcellularLocation>
</comment>
<comment type="similarity">
    <text evidence="7">Belongs to the complex I 51 kDa subunit family.</text>
</comment>
<gene>
    <name evidence="5" type="primary">hydB</name>
    <name evidence="10" type="ordered locus">TM_1425</name>
    <name evidence="11" type="ORF">Tmari_1431</name>
</gene>
<proteinExistence type="evidence at protein level"/>
<feature type="chain" id="PRO_0000457857" description="Bifurcating [FeFe] hydrogenase beta subunit">
    <location>
        <begin position="1"/>
        <end position="626"/>
    </location>
</feature>
<feature type="domain" description="4Fe-4S ferredoxin-type 1" evidence="2">
    <location>
        <begin position="569"/>
        <end position="598"/>
    </location>
</feature>
<feature type="domain" description="4Fe-4S ferredoxin-type 2" evidence="2">
    <location>
        <begin position="599"/>
        <end position="626"/>
    </location>
</feature>
<feature type="binding site" evidence="1">
    <location>
        <begin position="198"/>
        <end position="201"/>
    </location>
    <ligand>
        <name>NAD(+)</name>
        <dbReference type="ChEBI" id="CHEBI:57540"/>
    </ligand>
</feature>
<feature type="binding site" evidence="1">
    <location>
        <position position="207"/>
    </location>
    <ligand>
        <name>FMN</name>
        <dbReference type="ChEBI" id="CHEBI:58210"/>
    </ligand>
</feature>
<feature type="binding site" evidence="1">
    <location>
        <begin position="224"/>
        <end position="228"/>
    </location>
    <ligand>
        <name>FMN</name>
        <dbReference type="ChEBI" id="CHEBI:58210"/>
    </ligand>
</feature>
<feature type="binding site" evidence="1">
    <location>
        <position position="229"/>
    </location>
    <ligand>
        <name>NAD(+)</name>
        <dbReference type="ChEBI" id="CHEBI:57540"/>
    </ligand>
</feature>
<feature type="binding site" evidence="1">
    <location>
        <begin position="312"/>
        <end position="317"/>
    </location>
    <ligand>
        <name>FMN</name>
        <dbReference type="ChEBI" id="CHEBI:58210"/>
    </ligand>
</feature>
<feature type="binding site" evidence="1">
    <location>
        <begin position="350"/>
        <end position="352"/>
    </location>
    <ligand>
        <name>FMN</name>
        <dbReference type="ChEBI" id="CHEBI:58210"/>
    </ligand>
</feature>
<feature type="binding site" evidence="1">
    <location>
        <position position="485"/>
    </location>
    <ligand>
        <name>[4Fe-4S] cluster</name>
        <dbReference type="ChEBI" id="CHEBI:49883"/>
        <label>1</label>
    </ligand>
</feature>
<feature type="binding site" evidence="1">
    <location>
        <position position="488"/>
    </location>
    <ligand>
        <name>[4Fe-4S] cluster</name>
        <dbReference type="ChEBI" id="CHEBI:49883"/>
        <label>1</label>
    </ligand>
</feature>
<feature type="binding site" evidence="1">
    <location>
        <position position="491"/>
    </location>
    <ligand>
        <name>[4Fe-4S] cluster</name>
        <dbReference type="ChEBI" id="CHEBI:49883"/>
        <label>1</label>
    </ligand>
</feature>
<feature type="binding site" evidence="1">
    <location>
        <position position="531"/>
    </location>
    <ligand>
        <name>[4Fe-4S] cluster</name>
        <dbReference type="ChEBI" id="CHEBI:49883"/>
        <label>1</label>
    </ligand>
</feature>
<feature type="binding site" evidence="2">
    <location>
        <position position="578"/>
    </location>
    <ligand>
        <name>[4Fe-4S] cluster</name>
        <dbReference type="ChEBI" id="CHEBI:49883"/>
        <label>2</label>
    </ligand>
</feature>
<feature type="binding site" evidence="2">
    <location>
        <position position="581"/>
    </location>
    <ligand>
        <name>[4Fe-4S] cluster</name>
        <dbReference type="ChEBI" id="CHEBI:49883"/>
        <label>2</label>
    </ligand>
</feature>
<feature type="binding site" evidence="2">
    <location>
        <position position="584"/>
    </location>
    <ligand>
        <name>[4Fe-4S] cluster</name>
        <dbReference type="ChEBI" id="CHEBI:49883"/>
        <label>2</label>
    </ligand>
</feature>
<feature type="binding site" evidence="2">
    <location>
        <position position="588"/>
    </location>
    <ligand>
        <name>[4Fe-4S] cluster</name>
        <dbReference type="ChEBI" id="CHEBI:49883"/>
        <label>2</label>
    </ligand>
</feature>
<feature type="binding site" evidence="2">
    <location>
        <position position="608"/>
    </location>
    <ligand>
        <name>[4Fe-4S] cluster</name>
        <dbReference type="ChEBI" id="CHEBI:49883"/>
        <label>3</label>
    </ligand>
</feature>
<feature type="binding site" evidence="2">
    <location>
        <position position="611"/>
    </location>
    <ligand>
        <name>[4Fe-4S] cluster</name>
        <dbReference type="ChEBI" id="CHEBI:49883"/>
        <label>3</label>
    </ligand>
</feature>
<feature type="binding site" evidence="2">
    <location>
        <position position="614"/>
    </location>
    <ligand>
        <name>[4Fe-4S] cluster</name>
        <dbReference type="ChEBI" id="CHEBI:49883"/>
        <label>3</label>
    </ligand>
</feature>
<feature type="binding site" evidence="2">
    <location>
        <position position="618"/>
    </location>
    <ligand>
        <name>[4Fe-4S] cluster</name>
        <dbReference type="ChEBI" id="CHEBI:49883"/>
        <label>3</label>
    </ligand>
</feature>
<feature type="helix" evidence="12">
    <location>
        <begin position="5"/>
        <end position="24"/>
    </location>
</feature>
<feature type="strand" evidence="12">
    <location>
        <begin position="27"/>
        <end position="31"/>
    </location>
</feature>
<feature type="turn" evidence="12">
    <location>
        <begin position="34"/>
        <end position="36"/>
    </location>
</feature>
<feature type="helix" evidence="12">
    <location>
        <begin position="37"/>
        <end position="39"/>
    </location>
</feature>
<feature type="helix" evidence="12">
    <location>
        <begin position="41"/>
        <end position="55"/>
    </location>
</feature>
<feature type="strand" evidence="12">
    <location>
        <begin position="72"/>
        <end position="76"/>
    </location>
</feature>
<feature type="helix" evidence="12">
    <location>
        <begin position="82"/>
        <end position="84"/>
    </location>
</feature>
<feature type="strand" evidence="12">
    <location>
        <begin position="86"/>
        <end position="90"/>
    </location>
</feature>
<feature type="turn" evidence="12">
    <location>
        <begin position="91"/>
        <end position="94"/>
    </location>
</feature>
<feature type="strand" evidence="12">
    <location>
        <begin position="97"/>
        <end position="99"/>
    </location>
</feature>
<feature type="helix" evidence="14">
    <location>
        <begin position="102"/>
        <end position="104"/>
    </location>
</feature>
<feature type="helix" evidence="12">
    <location>
        <begin position="105"/>
        <end position="112"/>
    </location>
</feature>
<feature type="strand" evidence="12">
    <location>
        <begin position="122"/>
        <end position="125"/>
    </location>
</feature>
<feature type="turn" evidence="12">
    <location>
        <begin position="127"/>
        <end position="129"/>
    </location>
</feature>
<feature type="strand" evidence="12">
    <location>
        <begin position="131"/>
        <end position="134"/>
    </location>
</feature>
<feature type="helix" evidence="13">
    <location>
        <begin position="136"/>
        <end position="138"/>
    </location>
</feature>
<feature type="helix" evidence="12">
    <location>
        <begin position="140"/>
        <end position="144"/>
    </location>
</feature>
<feature type="strand" evidence="12">
    <location>
        <begin position="148"/>
        <end position="150"/>
    </location>
</feature>
<feature type="helix" evidence="12">
    <location>
        <begin position="161"/>
        <end position="166"/>
    </location>
</feature>
<feature type="turn" evidence="15">
    <location>
        <begin position="167"/>
        <end position="170"/>
    </location>
</feature>
<feature type="helix" evidence="12">
    <location>
        <begin position="171"/>
        <end position="178"/>
    </location>
</feature>
<feature type="helix" evidence="12">
    <location>
        <begin position="182"/>
        <end position="192"/>
    </location>
</feature>
<feature type="turn" evidence="12">
    <location>
        <begin position="197"/>
        <end position="200"/>
    </location>
</feature>
<feature type="helix" evidence="12">
    <location>
        <begin position="204"/>
        <end position="213"/>
    </location>
</feature>
<feature type="strand" evidence="12">
    <location>
        <begin position="220"/>
        <end position="224"/>
    </location>
</feature>
<feature type="helix" evidence="12">
    <location>
        <begin position="234"/>
        <end position="241"/>
    </location>
</feature>
<feature type="helix" evidence="12">
    <location>
        <begin position="243"/>
        <end position="256"/>
    </location>
</feature>
<feature type="strand" evidence="12">
    <location>
        <begin position="260"/>
        <end position="267"/>
    </location>
</feature>
<feature type="helix" evidence="12">
    <location>
        <begin position="271"/>
        <end position="286"/>
    </location>
</feature>
<feature type="strand" evidence="12">
    <location>
        <begin position="289"/>
        <end position="292"/>
    </location>
</feature>
<feature type="strand" evidence="12">
    <location>
        <begin position="301"/>
        <end position="308"/>
    </location>
</feature>
<feature type="helix" evidence="12">
    <location>
        <begin position="312"/>
        <end position="315"/>
    </location>
</feature>
<feature type="helix" evidence="12">
    <location>
        <begin position="317"/>
        <end position="324"/>
    </location>
</feature>
<feature type="turn" evidence="12">
    <location>
        <begin position="338"/>
        <end position="340"/>
    </location>
</feature>
<feature type="helix" evidence="12">
    <location>
        <begin position="343"/>
        <end position="345"/>
    </location>
</feature>
<feature type="strand" evidence="12">
    <location>
        <begin position="348"/>
        <end position="352"/>
    </location>
</feature>
<feature type="helix" evidence="12">
    <location>
        <begin position="353"/>
        <end position="364"/>
    </location>
</feature>
<feature type="helix" evidence="12">
    <location>
        <begin position="367"/>
        <end position="370"/>
    </location>
</feature>
<feature type="strand" evidence="12">
    <location>
        <begin position="373"/>
        <end position="375"/>
    </location>
</feature>
<feature type="strand" evidence="12">
    <location>
        <begin position="378"/>
        <end position="389"/>
    </location>
</feature>
<feature type="strand" evidence="12">
    <location>
        <begin position="394"/>
        <end position="399"/>
    </location>
</feature>
<feature type="helix" evidence="12">
    <location>
        <begin position="404"/>
        <end position="410"/>
    </location>
</feature>
<feature type="strand" evidence="12">
    <location>
        <begin position="421"/>
        <end position="427"/>
    </location>
</feature>
<feature type="helix" evidence="12">
    <location>
        <begin position="428"/>
        <end position="430"/>
    </location>
</feature>
<feature type="helix" evidence="12">
    <location>
        <begin position="437"/>
        <end position="439"/>
    </location>
</feature>
<feature type="strand" evidence="12">
    <location>
        <begin position="440"/>
        <end position="442"/>
    </location>
</feature>
<feature type="helix" evidence="12">
    <location>
        <begin position="447"/>
        <end position="450"/>
    </location>
</feature>
<feature type="strand" evidence="12">
    <location>
        <begin position="457"/>
        <end position="464"/>
    </location>
</feature>
<feature type="helix" evidence="12">
    <location>
        <begin position="469"/>
        <end position="483"/>
    </location>
</feature>
<feature type="helix" evidence="12">
    <location>
        <begin position="489"/>
        <end position="506"/>
    </location>
</feature>
<feature type="helix" evidence="12">
    <location>
        <begin position="512"/>
        <end position="528"/>
    </location>
</feature>
<feature type="helix" evidence="12">
    <location>
        <begin position="532"/>
        <end position="536"/>
    </location>
</feature>
<feature type="helix" evidence="12">
    <location>
        <begin position="539"/>
        <end position="547"/>
    </location>
</feature>
<feature type="helix" evidence="12">
    <location>
        <begin position="549"/>
        <end position="557"/>
    </location>
</feature>
<feature type="strand" evidence="12">
    <location>
        <begin position="561"/>
        <end position="563"/>
    </location>
</feature>
<feature type="turn" evidence="15">
    <location>
        <begin position="566"/>
        <end position="568"/>
    </location>
</feature>
<feature type="helix" evidence="15">
    <location>
        <begin position="575"/>
        <end position="577"/>
    </location>
</feature>
<feature type="strand" evidence="15">
    <location>
        <begin position="585"/>
        <end position="590"/>
    </location>
</feature>
<feature type="helix" evidence="13">
    <location>
        <begin position="605"/>
        <end position="607"/>
    </location>
</feature>
<feature type="strand" evidence="15">
    <location>
        <begin position="614"/>
        <end position="620"/>
    </location>
</feature>
<reference key="1">
    <citation type="journal article" date="1999" name="Biochim. Biophys. Acta">
        <title>The hyperthermophilic bacterium, Thermotoga maritima, contains an unusually complex iron-hydrogenase: amino acid sequence analyses versus biochemical characterization.</title>
        <authorList>
            <person name="Verhagen M.F."/>
            <person name="O'Rourke T."/>
            <person name="Adams M.W."/>
        </authorList>
    </citation>
    <scope>NUCLEOTIDE SEQUENCE [GENOMIC DNA]</scope>
    <scope>PROTEIN SEQUENCE OF 1-16</scope>
    <scope>COFACTOR</scope>
    <scope>SUBUNIT</scope>
    <source>
        <strain>ATCC 43589 / DSM 3109 / JCM 10099 / NBRC 100826 / MSB8</strain>
    </source>
</reference>
<reference key="2">
    <citation type="journal article" date="1999" name="Nature">
        <title>Evidence for lateral gene transfer between Archaea and Bacteria from genome sequence of Thermotoga maritima.</title>
        <authorList>
            <person name="Nelson K.E."/>
            <person name="Clayton R.A."/>
            <person name="Gill S.R."/>
            <person name="Gwinn M.L."/>
            <person name="Dodson R.J."/>
            <person name="Haft D.H."/>
            <person name="Hickey E.K."/>
            <person name="Peterson J.D."/>
            <person name="Nelson W.C."/>
            <person name="Ketchum K.A."/>
            <person name="McDonald L.A."/>
            <person name="Utterback T.R."/>
            <person name="Malek J.A."/>
            <person name="Linher K.D."/>
            <person name="Garrett M.M."/>
            <person name="Stewart A.M."/>
            <person name="Cotton M.D."/>
            <person name="Pratt M.S."/>
            <person name="Phillips C.A."/>
            <person name="Richardson D.L."/>
            <person name="Heidelberg J.F."/>
            <person name="Sutton G.G."/>
            <person name="Fleischmann R.D."/>
            <person name="Eisen J.A."/>
            <person name="White O."/>
            <person name="Salzberg S.L."/>
            <person name="Smith H.O."/>
            <person name="Venter J.C."/>
            <person name="Fraser C.M."/>
        </authorList>
    </citation>
    <scope>NUCLEOTIDE SEQUENCE [LARGE SCALE GENOMIC DNA]</scope>
    <source>
        <strain>ATCC 43589 / DSM 3109 / JCM 10099 / NBRC 100826 / MSB8</strain>
    </source>
</reference>
<reference key="3">
    <citation type="journal article" date="2013" name="PLoS Genet.">
        <title>The genome organization of Thermotoga maritima reflects its lifestyle.</title>
        <authorList>
            <person name="Latif H."/>
            <person name="Lerman J.A."/>
            <person name="Portnoy V.A."/>
            <person name="Tarasova Y."/>
            <person name="Nagarajan H."/>
            <person name="Schrimpe-Rutledge A.C."/>
            <person name="Smith R.D."/>
            <person name="Adkins J.N."/>
            <person name="Lee D.H."/>
            <person name="Qiu Y."/>
            <person name="Zengler K."/>
        </authorList>
    </citation>
    <scope>NUCLEOTIDE SEQUENCE [LARGE SCALE GENOMIC DNA]</scope>
    <source>
        <strain>ATCC 43589 / DSM 3109 / JCM 10099 / NBRC 100826 / MSB8</strain>
    </source>
</reference>
<reference key="4">
    <citation type="journal article" date="2009" name="J. Bacteriol.">
        <title>The iron-hydrogenase of Thermotoga maritima utilizes ferredoxin and NADH synergistically: a new perspective on anaerobic hydrogen production.</title>
        <authorList>
            <person name="Schut G.J."/>
            <person name="Adams M.W."/>
        </authorList>
    </citation>
    <scope>FUNCTION</scope>
    <scope>CATALYTIC ACTIVITY</scope>
    <scope>COFACTOR</scope>
    <scope>SUBCELLULAR LOCATION</scope>
    <source>
        <strain>ATCC 43589 / DSM 3109 / JCM 10099 / NBRC 100826 / MSB8</strain>
    </source>
</reference>
<protein>
    <recommendedName>
        <fullName evidence="6">Bifurcating [FeFe] hydrogenase beta subunit</fullName>
        <ecNumber evidence="4">1.12.1.4</ecNumber>
    </recommendedName>
    <alternativeName>
        <fullName evidence="7">Hydrogenase (NAD(+), ferredoxin) beta subunit</fullName>
    </alternativeName>
    <alternativeName>
        <fullName evidence="5">Iron-hydrogenase beta subunit</fullName>
    </alternativeName>
</protein>
<organism>
    <name type="scientific">Thermotoga maritima (strain ATCC 43589 / DSM 3109 / JCM 10099 / NBRC 100826 / MSB8)</name>
    <dbReference type="NCBI Taxonomy" id="243274"/>
    <lineage>
        <taxon>Bacteria</taxon>
        <taxon>Thermotogati</taxon>
        <taxon>Thermotogota</taxon>
        <taxon>Thermotogae</taxon>
        <taxon>Thermotogales</taxon>
        <taxon>Thermotogaceae</taxon>
        <taxon>Thermotoga</taxon>
    </lineage>
</organism>
<dbReference type="EC" id="1.12.1.4" evidence="4"/>
<dbReference type="EMBL" id="AF044577">
    <property type="protein sequence ID" value="AAC02685.1"/>
    <property type="molecule type" value="Genomic_DNA"/>
</dbReference>
<dbReference type="EMBL" id="AE000512">
    <property type="protein sequence ID" value="AAD36495.1"/>
    <property type="molecule type" value="Genomic_DNA"/>
</dbReference>
<dbReference type="EMBL" id="CP004077">
    <property type="protein sequence ID" value="AGL50355.1"/>
    <property type="molecule type" value="Genomic_DNA"/>
</dbReference>
<dbReference type="PIR" id="F72256">
    <property type="entry name" value="F72256"/>
</dbReference>
<dbReference type="RefSeq" id="NP_229225.1">
    <property type="nucleotide sequence ID" value="NC_000853.1"/>
</dbReference>
<dbReference type="RefSeq" id="WP_004081675.1">
    <property type="nucleotide sequence ID" value="NZ_CP011107.1"/>
</dbReference>
<dbReference type="PDB" id="7P5H">
    <property type="method" value="EM"/>
    <property type="resolution" value="2.30 A"/>
    <property type="chains" value="B/E/b/e=1-626"/>
</dbReference>
<dbReference type="PDB" id="7P8N">
    <property type="method" value="EM"/>
    <property type="resolution" value="2.80 A"/>
    <property type="chains" value="B/b=1-626"/>
</dbReference>
<dbReference type="PDB" id="7P91">
    <property type="method" value="EM"/>
    <property type="resolution" value="2.80 A"/>
    <property type="chains" value="B/b=1-626"/>
</dbReference>
<dbReference type="PDB" id="7P92">
    <property type="method" value="EM"/>
    <property type="resolution" value="2.70 A"/>
    <property type="chains" value="B=1-626"/>
</dbReference>
<dbReference type="PDBsum" id="7P5H"/>
<dbReference type="PDBsum" id="7P8N"/>
<dbReference type="PDBsum" id="7P91"/>
<dbReference type="PDBsum" id="7P92"/>
<dbReference type="EMDB" id="EMD-13199"/>
<dbReference type="EMDB" id="EMD-13254"/>
<dbReference type="EMDB" id="EMD-13257"/>
<dbReference type="EMDB" id="EMD-13258"/>
<dbReference type="SMR" id="O52682"/>
<dbReference type="STRING" id="243274.TM_1425"/>
<dbReference type="PaxDb" id="243274-THEMA_07190"/>
<dbReference type="DNASU" id="898050"/>
<dbReference type="EnsemblBacteria" id="AAD36495">
    <property type="protein sequence ID" value="AAD36495"/>
    <property type="gene ID" value="TM_1425"/>
</dbReference>
<dbReference type="KEGG" id="tma:TM1425"/>
<dbReference type="KEGG" id="tmi:THEMA_07190"/>
<dbReference type="KEGG" id="tmm:Tmari_1431"/>
<dbReference type="KEGG" id="tmw:THMA_1455"/>
<dbReference type="PATRIC" id="fig|2336.4.peg.1417"/>
<dbReference type="eggNOG" id="COG1894">
    <property type="taxonomic scope" value="Bacteria"/>
</dbReference>
<dbReference type="OrthoDB" id="9761899at2"/>
<dbReference type="BioCyc" id="MetaCyc:MONOMER-262"/>
<dbReference type="Proteomes" id="UP000008183">
    <property type="component" value="Chromosome"/>
</dbReference>
<dbReference type="GO" id="GO:0005737">
    <property type="term" value="C:cytoplasm"/>
    <property type="evidence" value="ECO:0007669"/>
    <property type="project" value="UniProtKB-SubCell"/>
</dbReference>
<dbReference type="GO" id="GO:0051539">
    <property type="term" value="F:4 iron, 4 sulfur cluster binding"/>
    <property type="evidence" value="ECO:0007669"/>
    <property type="project" value="UniProtKB-KW"/>
</dbReference>
<dbReference type="GO" id="GO:0010181">
    <property type="term" value="F:FMN binding"/>
    <property type="evidence" value="ECO:0007669"/>
    <property type="project" value="InterPro"/>
</dbReference>
<dbReference type="GO" id="GO:0046872">
    <property type="term" value="F:metal ion binding"/>
    <property type="evidence" value="ECO:0007669"/>
    <property type="project" value="UniProtKB-KW"/>
</dbReference>
<dbReference type="GO" id="GO:0008137">
    <property type="term" value="F:NADH dehydrogenase (ubiquinone) activity"/>
    <property type="evidence" value="ECO:0007669"/>
    <property type="project" value="InterPro"/>
</dbReference>
<dbReference type="CDD" id="cd10549">
    <property type="entry name" value="MtMvhB_like"/>
    <property type="match status" value="1"/>
</dbReference>
<dbReference type="CDD" id="cd02980">
    <property type="entry name" value="TRX_Fd_family"/>
    <property type="match status" value="1"/>
</dbReference>
<dbReference type="FunFam" id="1.20.1440.230:FF:000001">
    <property type="entry name" value="Mitochondrial NADH dehydrogenase flavoprotein 1"/>
    <property type="match status" value="1"/>
</dbReference>
<dbReference type="FunFam" id="3.40.50.11540:FF:000001">
    <property type="entry name" value="NADH dehydrogenase [ubiquinone] flavoprotein 1, mitochondrial"/>
    <property type="match status" value="1"/>
</dbReference>
<dbReference type="Gene3D" id="3.10.20.600">
    <property type="match status" value="1"/>
</dbReference>
<dbReference type="Gene3D" id="3.30.70.20">
    <property type="match status" value="1"/>
</dbReference>
<dbReference type="Gene3D" id="6.10.250.1450">
    <property type="match status" value="1"/>
</dbReference>
<dbReference type="Gene3D" id="3.40.30.10">
    <property type="entry name" value="Glutaredoxin"/>
    <property type="match status" value="1"/>
</dbReference>
<dbReference type="Gene3D" id="3.40.50.11540">
    <property type="entry name" value="NADH-ubiquinone oxidoreductase 51kDa subunit"/>
    <property type="match status" value="1"/>
</dbReference>
<dbReference type="Gene3D" id="1.20.1440.230">
    <property type="entry name" value="NADH-ubiquinone oxidoreductase 51kDa subunit, iron-sulphur binding domain"/>
    <property type="match status" value="1"/>
</dbReference>
<dbReference type="InterPro" id="IPR017896">
    <property type="entry name" value="4Fe4S_Fe-S-bd"/>
</dbReference>
<dbReference type="InterPro" id="IPR017900">
    <property type="entry name" value="4Fe4S_Fe_S_CS"/>
</dbReference>
<dbReference type="InterPro" id="IPR001949">
    <property type="entry name" value="NADH-UbQ_OxRdtase_51kDa_CS"/>
</dbReference>
<dbReference type="InterPro" id="IPR011538">
    <property type="entry name" value="Nuo51_FMN-bd"/>
</dbReference>
<dbReference type="InterPro" id="IPR037225">
    <property type="entry name" value="Nuo51_FMN-bd_sf"/>
</dbReference>
<dbReference type="InterPro" id="IPR019575">
    <property type="entry name" value="Nuop51_4Fe4S-bd"/>
</dbReference>
<dbReference type="InterPro" id="IPR037207">
    <property type="entry name" value="Nuop51_4Fe4S-bd_sf"/>
</dbReference>
<dbReference type="InterPro" id="IPR036249">
    <property type="entry name" value="Thioredoxin-like_sf"/>
</dbReference>
<dbReference type="PANTHER" id="PTHR43578:SF2">
    <property type="entry name" value="BIFURCATING [FEFE] HYDROGENASE BETA SUBUNIT"/>
    <property type="match status" value="1"/>
</dbReference>
<dbReference type="PANTHER" id="PTHR43578">
    <property type="entry name" value="NADH-QUINONE OXIDOREDUCTASE SUBUNIT F"/>
    <property type="match status" value="1"/>
</dbReference>
<dbReference type="Pfam" id="PF01257">
    <property type="entry name" value="2Fe-2S_thioredx"/>
    <property type="match status" value="1"/>
</dbReference>
<dbReference type="Pfam" id="PF01512">
    <property type="entry name" value="Complex1_51K"/>
    <property type="match status" value="1"/>
</dbReference>
<dbReference type="Pfam" id="PF14697">
    <property type="entry name" value="Fer4_21"/>
    <property type="match status" value="1"/>
</dbReference>
<dbReference type="Pfam" id="PF10589">
    <property type="entry name" value="NADH_4Fe-4S"/>
    <property type="match status" value="1"/>
</dbReference>
<dbReference type="SMART" id="SM00928">
    <property type="entry name" value="NADH_4Fe-4S"/>
    <property type="match status" value="1"/>
</dbReference>
<dbReference type="SUPFAM" id="SSF54862">
    <property type="entry name" value="4Fe-4S ferredoxins"/>
    <property type="match status" value="1"/>
</dbReference>
<dbReference type="SUPFAM" id="SSF142019">
    <property type="entry name" value="Nqo1 FMN-binding domain-like"/>
    <property type="match status" value="1"/>
</dbReference>
<dbReference type="SUPFAM" id="SSF142984">
    <property type="entry name" value="Nqo1 middle domain-like"/>
    <property type="match status" value="1"/>
</dbReference>
<dbReference type="SUPFAM" id="SSF140490">
    <property type="entry name" value="Nqo1C-terminal domain-like"/>
    <property type="match status" value="1"/>
</dbReference>
<dbReference type="SUPFAM" id="SSF52833">
    <property type="entry name" value="Thioredoxin-like"/>
    <property type="match status" value="1"/>
</dbReference>
<dbReference type="PROSITE" id="PS00198">
    <property type="entry name" value="4FE4S_FER_1"/>
    <property type="match status" value="2"/>
</dbReference>
<dbReference type="PROSITE" id="PS51379">
    <property type="entry name" value="4FE4S_FER_2"/>
    <property type="match status" value="2"/>
</dbReference>
<dbReference type="PROSITE" id="PS00645">
    <property type="entry name" value="COMPLEX1_51K_2"/>
    <property type="match status" value="1"/>
</dbReference>
<accession>O52682</accession>
<accession>G4FFG0</accession>
<accession>Q7DF98</accession>
<name>HYDB_THEMA</name>
<sequence length="626" mass="68681">MFKNAKEFVQYANKLKTLREKKLNGVSIYVCVGTGCTAKGALKVYSAFEEELKKRNLLGQVTLEKIDDDKVTLNRTGCCGRCSSGPLVKIMPYRFFYSNVAPEDVPEIVDRTVLKGEPIERLFLTDPLTGEKVPRIEDTTLFKNQDFYIMEAIGESECDSIEDYIARSGYESLVKALTSMTPEEIIETVKASGLRGRGGGGFPTGLKWEFTRKAQGDIKFVVCNGDEGDPGAFMNRTLLERDPHLVLEGMIIAGYAVGAQKGYAYIRAEYPFAVKMFKKAIEDARKLGLLGENILGTGFSFDLEVKEGAGAFVCGEETALLASIEGKRGMPRPKPPFPAQSGLWGKPTLINNVETYANIPRILRDGVENYRKRGTENSPGTKMFSVAGPLKATGIIEVEFGTTLRDIIYNICGGFVEGEEFKAVQIGGPSGACLSEDFIDMPLDYDTLKKADAMVGSGGIVVITKKTCMVEVARFFLDFTKRESCGKCVPCREGTMQAYNILEKFTHGKATYEDLKTLEHLSKTIKTASLCGLGKTAPNPILSTLKLFREEYIAHIEGECPSGMCTAFKKYVINPDICKGCGLCARSCPQNAITGERGKPYTIDQEKCVKCGLCASKCPFKAIELV</sequence>
<keyword id="KW-0002">3D-structure</keyword>
<keyword id="KW-0004">4Fe-4S</keyword>
<keyword id="KW-0963">Cytoplasm</keyword>
<keyword id="KW-0903">Direct protein sequencing</keyword>
<keyword id="KW-0285">Flavoprotein</keyword>
<keyword id="KW-0288">FMN</keyword>
<keyword id="KW-0408">Iron</keyword>
<keyword id="KW-0411">Iron-sulfur</keyword>
<keyword id="KW-0479">Metal-binding</keyword>
<keyword id="KW-0520">NAD</keyword>
<keyword id="KW-0560">Oxidoreductase</keyword>
<keyword id="KW-1185">Reference proteome</keyword>
<keyword id="KW-0677">Repeat</keyword>